<comment type="function">
    <text>May regulate transcriptional activity.</text>
</comment>
<comment type="subunit">
    <text>Interacts with ZNF202.</text>
</comment>
<comment type="interaction">
    <interactant intactId="EBI-745846">
        <id>P57086</id>
    </interactant>
    <interactant intactId="EBI-11522760">
        <id>Q6RW13-2</id>
        <label>AGTRAP</label>
    </interactant>
    <organismsDiffer>false</organismsDiffer>
    <experiments>3</experiments>
</comment>
<comment type="interaction">
    <interactant intactId="EBI-745846">
        <id>P57086</id>
    </interactant>
    <interactant intactId="EBI-2606935">
        <id>Q96BI3</id>
        <label>APH1A</label>
    </interactant>
    <organismsDiffer>false</organismsDiffer>
    <experiments>3</experiments>
</comment>
<comment type="interaction">
    <interactant intactId="EBI-745846">
        <id>P57086</id>
    </interactant>
    <interactant intactId="EBI-739580">
        <id>Q13137</id>
        <label>CALCOCO2</label>
    </interactant>
    <organismsDiffer>false</organismsDiffer>
    <experiments>3</experiments>
</comment>
<comment type="interaction">
    <interactant intactId="EBI-745846">
        <id>P57086</id>
    </interactant>
    <interactant intactId="EBI-11926384">
        <id>Q96ER9</id>
        <label>CCDC51</label>
    </interactant>
    <organismsDiffer>false</organismsDiffer>
    <experiments>3</experiments>
</comment>
<comment type="interaction">
    <interactant intactId="EBI-745846">
        <id>P57086</id>
    </interactant>
    <interactant intactId="EBI-12831978">
        <id>Q6ZPD8</id>
        <label>DGAT2L6</label>
    </interactant>
    <organismsDiffer>false</organismsDiffer>
    <experiments>3</experiments>
</comment>
<comment type="interaction">
    <interactant intactId="EBI-745846">
        <id>P57086</id>
    </interactant>
    <interactant intactId="EBI-5916454">
        <id>A6NEM1</id>
        <label>GOLGA6L9</label>
    </interactant>
    <organismsDiffer>false</organismsDiffer>
    <experiments>3</experiments>
</comment>
<comment type="interaction">
    <interactant intactId="EBI-745846">
        <id>P57086</id>
    </interactant>
    <interactant intactId="EBI-739467">
        <id>Q9H8Y8</id>
        <label>GORASP2</label>
    </interactant>
    <organismsDiffer>false</organismsDiffer>
    <experiments>6</experiments>
</comment>
<comment type="interaction">
    <interactant intactId="EBI-745846">
        <id>P57086</id>
    </interactant>
    <interactant intactId="EBI-10171697">
        <id>Q6A162</id>
        <label>KRT40</label>
    </interactant>
    <organismsDiffer>false</organismsDiffer>
    <experiments>3</experiments>
</comment>
<comment type="interaction">
    <interactant intactId="EBI-745846">
        <id>P57086</id>
    </interactant>
    <interactant intactId="EBI-2865388">
        <id>Q969G2</id>
        <label>LHX4</label>
    </interactant>
    <organismsDiffer>false</organismsDiffer>
    <experiments>3</experiments>
</comment>
<comment type="interaction">
    <interactant intactId="EBI-745846">
        <id>P57086</id>
    </interactant>
    <interactant intactId="EBI-1246293">
        <id>O43674</id>
        <label>NDUFB5</label>
    </interactant>
    <organismsDiffer>false</organismsDiffer>
    <experiments>3</experiments>
</comment>
<comment type="interaction">
    <interactant intactId="EBI-745846">
        <id>P57086</id>
    </interactant>
    <interactant intactId="EBI-10290053">
        <id>Q96JS3</id>
        <label>PGBD1</label>
    </interactant>
    <organismsDiffer>false</organismsDiffer>
    <experiments>13</experiments>
</comment>
<comment type="interaction">
    <interactant intactId="EBI-745846">
        <id>P57086</id>
    </interactant>
    <interactant intactId="EBI-79165">
        <id>Q9NRD5</id>
        <label>PICK1</label>
    </interactant>
    <organismsDiffer>false</organismsDiffer>
    <experiments>3</experiments>
</comment>
<comment type="interaction">
    <interactant intactId="EBI-745846">
        <id>P57086</id>
    </interactant>
    <interactant intactId="EBI-302345">
        <id>Q8ND90</id>
        <label>PNMA1</label>
    </interactant>
    <organismsDiffer>false</organismsDiffer>
    <experiments>3</experiments>
</comment>
<comment type="interaction">
    <interactant intactId="EBI-745846">
        <id>P57086</id>
    </interactant>
    <interactant intactId="EBI-943588">
        <id>Q16633</id>
        <label>POU2AF1</label>
    </interactant>
    <organismsDiffer>false</organismsDiffer>
    <experiments>3</experiments>
</comment>
<comment type="interaction">
    <interactant intactId="EBI-745846">
        <id>P57086</id>
    </interactant>
    <interactant intactId="EBI-716910">
        <id>O15258</id>
        <label>RER1</label>
    </interactant>
    <organismsDiffer>false</organismsDiffer>
    <experiments>3</experiments>
</comment>
<comment type="interaction">
    <interactant intactId="EBI-745846">
        <id>P57086</id>
    </interactant>
    <interactant intactId="EBI-2129361">
        <id>Q9NXI6</id>
        <label>RNF186</label>
    </interactant>
    <organismsDiffer>false</organismsDiffer>
    <experiments>3</experiments>
</comment>
<comment type="interaction">
    <interactant intactId="EBI-745846">
        <id>P57086</id>
    </interactant>
    <interactant intactId="EBI-1052363">
        <id>Q9NS64</id>
        <label>RPRM</label>
    </interactant>
    <organismsDiffer>false</organismsDiffer>
    <experiments>3</experiments>
</comment>
<comment type="interaction">
    <interactant intactId="EBI-745846">
        <id>P57086</id>
    </interactant>
    <interactant intactId="EBI-2854842">
        <id>Q8WV19</id>
        <label>SFT2D1</label>
    </interactant>
    <organismsDiffer>false</organismsDiffer>
    <experiments>3</experiments>
</comment>
<comment type="interaction">
    <interactant intactId="EBI-745846">
        <id>P57086</id>
    </interactant>
    <interactant intactId="EBI-13369834">
        <id>Q8N114-3</id>
        <label>SHISA5</label>
    </interactant>
    <organismsDiffer>false</organismsDiffer>
    <experiments>3</experiments>
</comment>
<comment type="interaction">
    <interactant intactId="EBI-745846">
        <id>P57086</id>
    </interactant>
    <interactant intactId="EBI-3940816">
        <id>Q9BYT1</id>
        <label>SLC17A9</label>
    </interactant>
    <organismsDiffer>false</organismsDiffer>
    <experiments>3</experiments>
</comment>
<comment type="interaction">
    <interactant intactId="EBI-745846">
        <id>P57086</id>
    </interactant>
    <interactant intactId="EBI-13301303">
        <id>Q6UWW9</id>
        <label>TMEM207</label>
    </interactant>
    <organismsDiffer>false</organismsDiffer>
    <experiments>3</experiments>
</comment>
<comment type="interaction">
    <interactant intactId="EBI-745846">
        <id>P57086</id>
    </interactant>
    <interactant intactId="EBI-11528917">
        <id>Q8WW34-2</id>
        <label>TMEM239</label>
    </interactant>
    <organismsDiffer>false</organismsDiffer>
    <experiments>3</experiments>
</comment>
<comment type="interaction">
    <interactant intactId="EBI-745846">
        <id>P57086</id>
    </interactant>
    <interactant intactId="EBI-12892569">
        <id>Q3KNT9</id>
        <label>TMEM95</label>
    </interactant>
    <organismsDiffer>false</organismsDiffer>
    <experiments>3</experiments>
</comment>
<comment type="interaction">
    <interactant intactId="EBI-745846">
        <id>P57086</id>
    </interactant>
    <interactant intactId="EBI-742327">
        <id>Q15654</id>
        <label>TRIP6</label>
    </interactant>
    <organismsDiffer>false</organismsDiffer>
    <experiments>3</experiments>
</comment>
<comment type="interaction">
    <interactant intactId="EBI-745846">
        <id>P57086</id>
    </interactant>
    <interactant intactId="EBI-13296313">
        <id>A6NH52</id>
        <label>TVP23A</label>
    </interactant>
    <organismsDiffer>false</organismsDiffer>
    <experiments>3</experiments>
</comment>
<comment type="interaction">
    <interactant intactId="EBI-745846">
        <id>P57086</id>
    </interactant>
    <interactant intactId="EBI-1965777">
        <id>Q9BRR0</id>
        <label>ZKSCAN3</label>
    </interactant>
    <organismsDiffer>false</organismsDiffer>
    <experiments>3</experiments>
</comment>
<comment type="interaction">
    <interactant intactId="EBI-745846">
        <id>P57086</id>
    </interactant>
    <interactant intactId="EBI-2818641">
        <id>Q969J2</id>
        <label>ZKSCAN4</label>
    </interactant>
    <organismsDiffer>false</organismsDiffer>
    <experiments>9</experiments>
</comment>
<comment type="interaction">
    <interactant intactId="EBI-745846">
        <id>P57086</id>
    </interactant>
    <interactant intactId="EBI-743851">
        <id>Q9P0L1</id>
        <label>ZKSCAN7</label>
    </interactant>
    <organismsDiffer>false</organismsDiffer>
    <experiments>4</experiments>
</comment>
<comment type="interaction">
    <interactant intactId="EBI-745846">
        <id>P57086</id>
    </interactant>
    <interactant intactId="EBI-10698225">
        <id>Q9P0L1-2</id>
        <label>ZKSCAN7</label>
    </interactant>
    <organismsDiffer>false</organismsDiffer>
    <experiments>6</experiments>
</comment>
<comment type="interaction">
    <interactant intactId="EBI-745846">
        <id>P57086</id>
    </interactant>
    <interactant intactId="EBI-741694">
        <id>P49910</id>
        <label>ZNF165</label>
    </interactant>
    <organismsDiffer>false</organismsDiffer>
    <experiments>11</experiments>
</comment>
<comment type="interaction">
    <interactant intactId="EBI-745846">
        <id>P57086</id>
    </interactant>
    <interactant intactId="EBI-11158827">
        <id>Q15697-2</id>
        <label>ZNF174</label>
    </interactant>
    <organismsDiffer>false</organismsDiffer>
    <experiments>3</experiments>
</comment>
<comment type="interaction">
    <interactant intactId="EBI-745846">
        <id>P57086</id>
    </interactant>
    <interactant intactId="EBI-751960">
        <id>O95125</id>
        <label>ZNF202</label>
    </interactant>
    <organismsDiffer>false</organismsDiffer>
    <experiments>3</experiments>
</comment>
<comment type="interaction">
    <interactant intactId="EBI-745846">
        <id>P57086</id>
    </interactant>
    <interactant intactId="EBI-12838388">
        <id>O14771</id>
        <label>ZNF213</label>
    </interactant>
    <organismsDiffer>false</organismsDiffer>
    <experiments>5</experiments>
</comment>
<comment type="interaction">
    <interactant intactId="EBI-745846">
        <id>P57086</id>
    </interactant>
    <interactant intactId="EBI-707773">
        <id>P17028</id>
        <label>ZNF24</label>
    </interactant>
    <organismsDiffer>false</organismsDiffer>
    <experiments>8</experiments>
</comment>
<comment type="interaction">
    <interactant intactId="EBI-745846">
        <id>P57086</id>
    </interactant>
    <interactant intactId="EBI-744493">
        <id>O14978</id>
        <label>ZNF263</label>
    </interactant>
    <organismsDiffer>false</organismsDiffer>
    <experiments>7</experiments>
</comment>
<comment type="interaction">
    <interactant intactId="EBI-745846">
        <id>P57086</id>
    </interactant>
    <interactant intactId="EBI-10211248">
        <id>Q53GI3</id>
        <label>ZNF394</label>
    </interactant>
    <organismsDiffer>false</organismsDiffer>
    <experiments>12</experiments>
</comment>
<comment type="interaction">
    <interactant intactId="EBI-745846">
        <id>P57086</id>
    </interactant>
    <interactant intactId="EBI-12328453">
        <id>Q96N95-3</id>
        <label>ZNF396</label>
    </interactant>
    <organismsDiffer>false</organismsDiffer>
    <experiments>6</experiments>
</comment>
<comment type="interaction">
    <interactant intactId="EBI-745846">
        <id>P57086</id>
    </interactant>
    <interactant intactId="EBI-10213894">
        <id>Q8NF99</id>
        <label>ZNF397</label>
    </interactant>
    <organismsDiffer>false</organismsDiffer>
    <experiments>4</experiments>
</comment>
<comment type="interaction">
    <interactant intactId="EBI-745846">
        <id>P57086</id>
    </interactant>
    <interactant intactId="EBI-11524467">
        <id>Q8NF99-2</id>
        <label>ZNF397</label>
    </interactant>
    <organismsDiffer>false</organismsDiffer>
    <experiments>4</experiments>
</comment>
<comment type="interaction">
    <interactant intactId="EBI-745846">
        <id>P57086</id>
    </interactant>
    <interactant intactId="EBI-740232">
        <id>Q9NWS9-2</id>
        <label>ZNF446</label>
    </interactant>
    <organismsDiffer>false</organismsDiffer>
    <experiments>5</experiments>
</comment>
<comment type="interaction">
    <interactant intactId="EBI-745846">
        <id>P57086</id>
    </interactant>
    <interactant intactId="EBI-10215956">
        <id>Q6P9G9</id>
        <label>ZNF449</label>
    </interactant>
    <organismsDiffer>false</organismsDiffer>
    <experiments>8</experiments>
</comment>
<comment type="interaction">
    <interactant intactId="EBI-745846">
        <id>P57086</id>
    </interactant>
    <interactant intactId="EBI-10196963">
        <id>Q6P088</id>
        <label>ZNF483</label>
    </interactant>
    <organismsDiffer>false</organismsDiffer>
    <experiments>3</experiments>
</comment>
<comment type="interaction">
    <interactant intactId="EBI-745846">
        <id>P57086</id>
    </interactant>
    <interactant intactId="EBI-743906">
        <id>Q96IT1</id>
        <label>ZNF496</label>
    </interactant>
    <organismsDiffer>false</organismsDiffer>
    <experiments>4</experiments>
</comment>
<comment type="interaction">
    <interactant intactId="EBI-745846">
        <id>P57086</id>
    </interactant>
    <interactant intactId="EBI-1210440">
        <id>O43309</id>
        <label>ZSCAN12</label>
    </interactant>
    <organismsDiffer>false</organismsDiffer>
    <experiments>5</experiments>
</comment>
<comment type="interaction">
    <interactant intactId="EBI-745846">
        <id>P57086</id>
    </interactant>
    <interactant intactId="EBI-723596">
        <id>Q9H4T2</id>
        <label>ZSCAN16</label>
    </interactant>
    <organismsDiffer>false</organismsDiffer>
    <experiments>3</experiments>
</comment>
<comment type="interaction">
    <interactant intactId="EBI-745846">
        <id>P57086</id>
    </interactant>
    <interactant intactId="EBI-3919096">
        <id>Q8TBC5</id>
        <label>ZSCAN18</label>
    </interactant>
    <organismsDiffer>false</organismsDiffer>
    <experiments>5</experiments>
</comment>
<comment type="interaction">
    <interactant intactId="EBI-745846">
        <id>P57086</id>
    </interactant>
    <interactant intactId="EBI-745838">
        <id>P17040</id>
        <label>ZSCAN20</label>
    </interactant>
    <organismsDiffer>false</organismsDiffer>
    <experiments>3</experiments>
</comment>
<comment type="interaction">
    <interactant intactId="EBI-745846">
        <id>P57086</id>
    </interactant>
    <interactant intactId="EBI-10178224">
        <id>P10073</id>
        <label>ZSCAN22</label>
    </interactant>
    <organismsDiffer>false</organismsDiffer>
    <experiments>7</experiments>
</comment>
<comment type="interaction">
    <interactant intactId="EBI-745846">
        <id>P57086</id>
    </interactant>
    <interactant intactId="EBI-5667532">
        <id>Q3MJ62</id>
        <label>ZSCAN23</label>
    </interactant>
    <organismsDiffer>false</organismsDiffer>
    <experiments>10</experiments>
</comment>
<comment type="interaction">
    <interactant intactId="EBI-745846">
        <id>P57086</id>
    </interactant>
    <interactant intactId="EBI-14650477">
        <id>Q6NSZ9-2</id>
        <label>ZSCAN25</label>
    </interactant>
    <organismsDiffer>false</organismsDiffer>
    <experiments>3</experiments>
</comment>
<comment type="interaction">
    <interactant intactId="EBI-745846">
        <id>P57086</id>
    </interactant>
    <interactant intactId="EBI-739949">
        <id>Q9NX65</id>
        <label>ZSCAN32</label>
    </interactant>
    <organismsDiffer>false</organismsDiffer>
    <experiments>5</experiments>
</comment>
<comment type="subcellular location">
    <subcellularLocation>
        <location evidence="1">Nucleus</location>
    </subcellularLocation>
</comment>
<proteinExistence type="evidence at protein level"/>
<keyword id="KW-0539">Nucleus</keyword>
<keyword id="KW-1267">Proteomics identification</keyword>
<keyword id="KW-1185">Reference proteome</keyword>
<organism>
    <name type="scientific">Homo sapiens</name>
    <name type="common">Human</name>
    <dbReference type="NCBI Taxonomy" id="9606"/>
    <lineage>
        <taxon>Eukaryota</taxon>
        <taxon>Metazoa</taxon>
        <taxon>Chordata</taxon>
        <taxon>Craniata</taxon>
        <taxon>Vertebrata</taxon>
        <taxon>Euteleostomi</taxon>
        <taxon>Mammalia</taxon>
        <taxon>Eutheria</taxon>
        <taxon>Euarchontoglires</taxon>
        <taxon>Primates</taxon>
        <taxon>Haplorrhini</taxon>
        <taxon>Catarrhini</taxon>
        <taxon>Hominidae</taxon>
        <taxon>Homo</taxon>
    </lineage>
</organism>
<name>SCND1_HUMAN</name>
<gene>
    <name type="primary">SCAND1</name>
    <name type="synonym">SDP1</name>
</gene>
<protein>
    <recommendedName>
        <fullName>SCAN domain-containing protein 1</fullName>
    </recommendedName>
</protein>
<dbReference type="EMBL" id="AF204271">
    <property type="protein sequence ID" value="AAF59839.1"/>
    <property type="molecule type" value="mRNA"/>
</dbReference>
<dbReference type="EMBL" id="CR457188">
    <property type="protein sequence ID" value="CAG33469.1"/>
    <property type="molecule type" value="mRNA"/>
</dbReference>
<dbReference type="EMBL" id="AL109965">
    <property type="status" value="NOT_ANNOTATED_CDS"/>
    <property type="molecule type" value="Genomic_DNA"/>
</dbReference>
<dbReference type="EMBL" id="CH471077">
    <property type="protein sequence ID" value="EAW76150.1"/>
    <property type="molecule type" value="Genomic_DNA"/>
</dbReference>
<dbReference type="EMBL" id="BC000785">
    <property type="protein sequence ID" value="AAH00785.1"/>
    <property type="molecule type" value="mRNA"/>
</dbReference>
<dbReference type="EMBL" id="BC036709">
    <property type="protein sequence ID" value="AAH36709.1"/>
    <property type="molecule type" value="mRNA"/>
</dbReference>
<dbReference type="EMBL" id="BC041022">
    <property type="protein sequence ID" value="AAH41022.1"/>
    <property type="molecule type" value="mRNA"/>
</dbReference>
<dbReference type="CCDS" id="CCDS13269.1"/>
<dbReference type="RefSeq" id="NP_001372639.1">
    <property type="nucleotide sequence ID" value="NM_001385710.1"/>
</dbReference>
<dbReference type="RefSeq" id="NP_057642.1">
    <property type="nucleotide sequence ID" value="NM_016558.4"/>
</dbReference>
<dbReference type="RefSeq" id="NP_361012.3">
    <property type="nucleotide sequence ID" value="NM_033630.3"/>
</dbReference>
<dbReference type="SMR" id="P57086"/>
<dbReference type="BioGRID" id="119434">
    <property type="interactions" value="116"/>
</dbReference>
<dbReference type="FunCoup" id="P57086">
    <property type="interactions" value="684"/>
</dbReference>
<dbReference type="IntAct" id="P57086">
    <property type="interactions" value="67"/>
</dbReference>
<dbReference type="MINT" id="P57086"/>
<dbReference type="STRING" id="9606.ENSP00000363103"/>
<dbReference type="MoonDB" id="P57086">
    <property type="type" value="Predicted"/>
</dbReference>
<dbReference type="iPTMnet" id="P57086"/>
<dbReference type="PhosphoSitePlus" id="P57086"/>
<dbReference type="BioMuta" id="SCAND1"/>
<dbReference type="DMDM" id="10720272"/>
<dbReference type="jPOST" id="P57086"/>
<dbReference type="MassIVE" id="P57086"/>
<dbReference type="PaxDb" id="9606-ENSP00000363103"/>
<dbReference type="PeptideAtlas" id="P57086"/>
<dbReference type="ProteomicsDB" id="56995"/>
<dbReference type="Pumba" id="P57086"/>
<dbReference type="Antibodypedia" id="11616">
    <property type="antibodies" value="228 antibodies from 28 providers"/>
</dbReference>
<dbReference type="DNASU" id="51282"/>
<dbReference type="Ensembl" id="ENST00000305978.7">
    <property type="protein sequence ID" value="ENSP00000301995.2"/>
    <property type="gene ID" value="ENSG00000171222.11"/>
</dbReference>
<dbReference type="Ensembl" id="ENST00000373991.3">
    <property type="protein sequence ID" value="ENSP00000363103.3"/>
    <property type="gene ID" value="ENSG00000171222.11"/>
</dbReference>
<dbReference type="Ensembl" id="ENST00000615116.1">
    <property type="protein sequence ID" value="ENSP00000481289.1"/>
    <property type="gene ID" value="ENSG00000171222.11"/>
</dbReference>
<dbReference type="GeneID" id="51282"/>
<dbReference type="KEGG" id="hsa:51282"/>
<dbReference type="MANE-Select" id="ENST00000305978.7">
    <property type="protein sequence ID" value="ENSP00000301995.2"/>
    <property type="RefSeq nucleotide sequence ID" value="NM_033630.3"/>
    <property type="RefSeq protein sequence ID" value="NP_361012.3"/>
</dbReference>
<dbReference type="UCSC" id="uc002xen.3">
    <property type="organism name" value="human"/>
</dbReference>
<dbReference type="AGR" id="HGNC:10566"/>
<dbReference type="CTD" id="51282"/>
<dbReference type="DisGeNET" id="51282"/>
<dbReference type="GeneCards" id="SCAND1"/>
<dbReference type="HGNC" id="HGNC:10566">
    <property type="gene designation" value="SCAND1"/>
</dbReference>
<dbReference type="HPA" id="ENSG00000171222">
    <property type="expression patterns" value="Low tissue specificity"/>
</dbReference>
<dbReference type="MIM" id="610416">
    <property type="type" value="gene"/>
</dbReference>
<dbReference type="neXtProt" id="NX_P57086"/>
<dbReference type="OpenTargets" id="ENSG00000171222"/>
<dbReference type="PharmGKB" id="PA34979"/>
<dbReference type="VEuPathDB" id="HostDB:ENSG00000171222"/>
<dbReference type="eggNOG" id="KOG1721">
    <property type="taxonomic scope" value="Eukaryota"/>
</dbReference>
<dbReference type="GeneTree" id="ENSGT00940000163024"/>
<dbReference type="HOGENOM" id="CLU_107409_0_0_1"/>
<dbReference type="InParanoid" id="P57086"/>
<dbReference type="OMA" id="EKSEGAC"/>
<dbReference type="OrthoDB" id="6077919at2759"/>
<dbReference type="PAN-GO" id="P57086">
    <property type="GO annotations" value="0 GO annotations based on evolutionary models"/>
</dbReference>
<dbReference type="PhylomeDB" id="P57086"/>
<dbReference type="PathwayCommons" id="P57086"/>
<dbReference type="SignaLink" id="P57086"/>
<dbReference type="SIGNOR" id="P57086"/>
<dbReference type="BioGRID-ORCS" id="51282">
    <property type="hits" value="35 hits in 1156 CRISPR screens"/>
</dbReference>
<dbReference type="ChiTaRS" id="SCAND1">
    <property type="organism name" value="human"/>
</dbReference>
<dbReference type="GeneWiki" id="SCAND1"/>
<dbReference type="GenomeRNAi" id="51282"/>
<dbReference type="Pharos" id="P57086">
    <property type="development level" value="Tbio"/>
</dbReference>
<dbReference type="PRO" id="PR:P57086"/>
<dbReference type="Proteomes" id="UP000005640">
    <property type="component" value="Chromosome 20"/>
</dbReference>
<dbReference type="RNAct" id="P57086">
    <property type="molecule type" value="protein"/>
</dbReference>
<dbReference type="Bgee" id="ENSG00000171222">
    <property type="expression patterns" value="Expressed in mucosa of transverse colon and 191 other cell types or tissues"/>
</dbReference>
<dbReference type="GO" id="GO:0005634">
    <property type="term" value="C:nucleus"/>
    <property type="evidence" value="ECO:0000314"/>
    <property type="project" value="LIFEdb"/>
</dbReference>
<dbReference type="GO" id="GO:0045893">
    <property type="term" value="P:positive regulation of DNA-templated transcription"/>
    <property type="evidence" value="ECO:0007669"/>
    <property type="project" value="Ensembl"/>
</dbReference>
<dbReference type="CDD" id="cd07936">
    <property type="entry name" value="SCAN"/>
    <property type="match status" value="1"/>
</dbReference>
<dbReference type="FunFam" id="1.10.4020.10:FF:000003">
    <property type="entry name" value="SCAN domain-containing protein 1"/>
    <property type="match status" value="1"/>
</dbReference>
<dbReference type="Gene3D" id="1.10.4020.10">
    <property type="entry name" value="DNA breaking-rejoining enzymes"/>
    <property type="match status" value="1"/>
</dbReference>
<dbReference type="InterPro" id="IPR050916">
    <property type="entry name" value="SCAN-C2H2_zinc_finger"/>
</dbReference>
<dbReference type="InterPro" id="IPR003309">
    <property type="entry name" value="SCAN_dom"/>
</dbReference>
<dbReference type="InterPro" id="IPR038269">
    <property type="entry name" value="SCAN_sf"/>
</dbReference>
<dbReference type="PANTHER" id="PTHR45935">
    <property type="entry name" value="PROTEIN ZBED8-RELATED"/>
    <property type="match status" value="1"/>
</dbReference>
<dbReference type="PANTHER" id="PTHR45935:SF10">
    <property type="entry name" value="SCAN DOMAIN-CONTAINING 1"/>
    <property type="match status" value="1"/>
</dbReference>
<dbReference type="Pfam" id="PF02023">
    <property type="entry name" value="SCAN"/>
    <property type="match status" value="1"/>
</dbReference>
<dbReference type="SMART" id="SM00431">
    <property type="entry name" value="SCAN"/>
    <property type="match status" value="1"/>
</dbReference>
<dbReference type="SUPFAM" id="SSF47353">
    <property type="entry name" value="Retrovirus capsid dimerization domain-like"/>
    <property type="match status" value="1"/>
</dbReference>
<dbReference type="PROSITE" id="PS50804">
    <property type="entry name" value="SCAN_BOX"/>
    <property type="match status" value="1"/>
</dbReference>
<sequence>MAATEPILAATGSPAAVPPEKLEGAGSSSAPERNCVGSSLPEASPPAPEPSSPNAAVPEAIPTPRAAASAALELPLGPAPVSVAPQAEAEARSTPGPAGSRLGPETFRQRFRQFRYQDAAGPREAFRQLRELSRQWLRPDIRTKEQIVEMLVQEQLLAILPEAARARRIRRRTDVRITG</sequence>
<reference key="1">
    <citation type="journal article" date="2000" name="J. Biol. Chem.">
        <title>The SCAN domain mediates selective oligomerization.</title>
        <authorList>
            <person name="Schumacher C."/>
            <person name="Wang H."/>
            <person name="Honer C."/>
            <person name="Ding W."/>
            <person name="Koehn J."/>
            <person name="Lawrence Q."/>
            <person name="Coulis C.M."/>
            <person name="Wang L.L."/>
            <person name="Ballinger D."/>
            <person name="Bowen B.R."/>
            <person name="Wagner S."/>
        </authorList>
    </citation>
    <scope>NUCLEOTIDE SEQUENCE [MRNA]</scope>
</reference>
<reference key="2">
    <citation type="submission" date="2004-06" db="EMBL/GenBank/DDBJ databases">
        <title>Cloning of human full open reading frames in Gateway(TM) system entry vector (pDONR201).</title>
        <authorList>
            <person name="Ebert L."/>
            <person name="Schick M."/>
            <person name="Neubert P."/>
            <person name="Schatten R."/>
            <person name="Henze S."/>
            <person name="Korn B."/>
        </authorList>
    </citation>
    <scope>NUCLEOTIDE SEQUENCE [LARGE SCALE MRNA]</scope>
</reference>
<reference key="3">
    <citation type="journal article" date="2001" name="Nature">
        <title>The DNA sequence and comparative analysis of human chromosome 20.</title>
        <authorList>
            <person name="Deloukas P."/>
            <person name="Matthews L.H."/>
            <person name="Ashurst J.L."/>
            <person name="Burton J."/>
            <person name="Gilbert J.G.R."/>
            <person name="Jones M."/>
            <person name="Stavrides G."/>
            <person name="Almeida J.P."/>
            <person name="Babbage A.K."/>
            <person name="Bagguley C.L."/>
            <person name="Bailey J."/>
            <person name="Barlow K.F."/>
            <person name="Bates K.N."/>
            <person name="Beard L.M."/>
            <person name="Beare D.M."/>
            <person name="Beasley O.P."/>
            <person name="Bird C.P."/>
            <person name="Blakey S.E."/>
            <person name="Bridgeman A.M."/>
            <person name="Brown A.J."/>
            <person name="Buck D."/>
            <person name="Burrill W.D."/>
            <person name="Butler A.P."/>
            <person name="Carder C."/>
            <person name="Carter N.P."/>
            <person name="Chapman J.C."/>
            <person name="Clamp M."/>
            <person name="Clark G."/>
            <person name="Clark L.N."/>
            <person name="Clark S.Y."/>
            <person name="Clee C.M."/>
            <person name="Clegg S."/>
            <person name="Cobley V.E."/>
            <person name="Collier R.E."/>
            <person name="Connor R.E."/>
            <person name="Corby N.R."/>
            <person name="Coulson A."/>
            <person name="Coville G.J."/>
            <person name="Deadman R."/>
            <person name="Dhami P.D."/>
            <person name="Dunn M."/>
            <person name="Ellington A.G."/>
            <person name="Frankland J.A."/>
            <person name="Fraser A."/>
            <person name="French L."/>
            <person name="Garner P."/>
            <person name="Grafham D.V."/>
            <person name="Griffiths C."/>
            <person name="Griffiths M.N.D."/>
            <person name="Gwilliam R."/>
            <person name="Hall R.E."/>
            <person name="Hammond S."/>
            <person name="Harley J.L."/>
            <person name="Heath P.D."/>
            <person name="Ho S."/>
            <person name="Holden J.L."/>
            <person name="Howden P.J."/>
            <person name="Huckle E."/>
            <person name="Hunt A.R."/>
            <person name="Hunt S.E."/>
            <person name="Jekosch K."/>
            <person name="Johnson C.M."/>
            <person name="Johnson D."/>
            <person name="Kay M.P."/>
            <person name="Kimberley A.M."/>
            <person name="King A."/>
            <person name="Knights A."/>
            <person name="Laird G.K."/>
            <person name="Lawlor S."/>
            <person name="Lehvaeslaiho M.H."/>
            <person name="Leversha M.A."/>
            <person name="Lloyd C."/>
            <person name="Lloyd D.M."/>
            <person name="Lovell J.D."/>
            <person name="Marsh V.L."/>
            <person name="Martin S.L."/>
            <person name="McConnachie L.J."/>
            <person name="McLay K."/>
            <person name="McMurray A.A."/>
            <person name="Milne S.A."/>
            <person name="Mistry D."/>
            <person name="Moore M.J.F."/>
            <person name="Mullikin J.C."/>
            <person name="Nickerson T."/>
            <person name="Oliver K."/>
            <person name="Parker A."/>
            <person name="Patel R."/>
            <person name="Pearce T.A.V."/>
            <person name="Peck A.I."/>
            <person name="Phillimore B.J.C.T."/>
            <person name="Prathalingam S.R."/>
            <person name="Plumb R.W."/>
            <person name="Ramsay H."/>
            <person name="Rice C.M."/>
            <person name="Ross M.T."/>
            <person name="Scott C.E."/>
            <person name="Sehra H.K."/>
            <person name="Shownkeen R."/>
            <person name="Sims S."/>
            <person name="Skuce C.D."/>
            <person name="Smith M.L."/>
            <person name="Soderlund C."/>
            <person name="Steward C.A."/>
            <person name="Sulston J.E."/>
            <person name="Swann R.M."/>
            <person name="Sycamore N."/>
            <person name="Taylor R."/>
            <person name="Tee L."/>
            <person name="Thomas D.W."/>
            <person name="Thorpe A."/>
            <person name="Tracey A."/>
            <person name="Tromans A.C."/>
            <person name="Vaudin M."/>
            <person name="Wall M."/>
            <person name="Wallis J.M."/>
            <person name="Whitehead S.L."/>
            <person name="Whittaker P."/>
            <person name="Willey D.L."/>
            <person name="Williams L."/>
            <person name="Williams S.A."/>
            <person name="Wilming L."/>
            <person name="Wray P.W."/>
            <person name="Hubbard T."/>
            <person name="Durbin R.M."/>
            <person name="Bentley D.R."/>
            <person name="Beck S."/>
            <person name="Rogers J."/>
        </authorList>
    </citation>
    <scope>NUCLEOTIDE SEQUENCE [LARGE SCALE GENOMIC DNA]</scope>
</reference>
<reference key="4">
    <citation type="submission" date="2005-09" db="EMBL/GenBank/DDBJ databases">
        <authorList>
            <person name="Mural R.J."/>
            <person name="Istrail S."/>
            <person name="Sutton G.G."/>
            <person name="Florea L."/>
            <person name="Halpern A.L."/>
            <person name="Mobarry C.M."/>
            <person name="Lippert R."/>
            <person name="Walenz B."/>
            <person name="Shatkay H."/>
            <person name="Dew I."/>
            <person name="Miller J.R."/>
            <person name="Flanigan M.J."/>
            <person name="Edwards N.J."/>
            <person name="Bolanos R."/>
            <person name="Fasulo D."/>
            <person name="Halldorsson B.V."/>
            <person name="Hannenhalli S."/>
            <person name="Turner R."/>
            <person name="Yooseph S."/>
            <person name="Lu F."/>
            <person name="Nusskern D.R."/>
            <person name="Shue B.C."/>
            <person name="Zheng X.H."/>
            <person name="Zhong F."/>
            <person name="Delcher A.L."/>
            <person name="Huson D.H."/>
            <person name="Kravitz S.A."/>
            <person name="Mouchard L."/>
            <person name="Reinert K."/>
            <person name="Remington K.A."/>
            <person name="Clark A.G."/>
            <person name="Waterman M.S."/>
            <person name="Eichler E.E."/>
            <person name="Adams M.D."/>
            <person name="Hunkapiller M.W."/>
            <person name="Myers E.W."/>
            <person name="Venter J.C."/>
        </authorList>
    </citation>
    <scope>NUCLEOTIDE SEQUENCE [LARGE SCALE GENOMIC DNA]</scope>
</reference>
<reference key="5">
    <citation type="journal article" date="2004" name="Genome Res.">
        <title>The status, quality, and expansion of the NIH full-length cDNA project: the Mammalian Gene Collection (MGC).</title>
        <authorList>
            <consortium name="The MGC Project Team"/>
        </authorList>
    </citation>
    <scope>NUCLEOTIDE SEQUENCE [LARGE SCALE MRNA]</scope>
    <source>
        <tissue>Brain</tissue>
        <tissue>Skin</tissue>
    </source>
</reference>
<accession>P57086</accession>
<accession>Q6IAG7</accession>
<feature type="chain" id="PRO_0000097632" description="SCAN domain-containing protein 1">
    <location>
        <begin position="1"/>
        <end position="179"/>
    </location>
</feature>
<feature type="domain" description="SCAN box" evidence="1">
    <location>
        <begin position="108"/>
        <end position="166"/>
    </location>
</feature>
<feature type="region of interest" description="Disordered" evidence="2">
    <location>
        <begin position="1"/>
        <end position="104"/>
    </location>
</feature>
<feature type="compositionally biased region" description="Low complexity" evidence="2">
    <location>
        <begin position="52"/>
        <end position="80"/>
    </location>
</feature>
<evidence type="ECO:0000255" key="1">
    <source>
        <dbReference type="PROSITE-ProRule" id="PRU00187"/>
    </source>
</evidence>
<evidence type="ECO:0000256" key="2">
    <source>
        <dbReference type="SAM" id="MobiDB-lite"/>
    </source>
</evidence>